<organism>
    <name type="scientific">Saccharomyces cerevisiae (strain ATCC 204508 / S288c)</name>
    <name type="common">Baker's yeast</name>
    <dbReference type="NCBI Taxonomy" id="559292"/>
    <lineage>
        <taxon>Eukaryota</taxon>
        <taxon>Fungi</taxon>
        <taxon>Dikarya</taxon>
        <taxon>Ascomycota</taxon>
        <taxon>Saccharomycotina</taxon>
        <taxon>Saccharomycetes</taxon>
        <taxon>Saccharomycetales</taxon>
        <taxon>Saccharomycetaceae</taxon>
        <taxon>Saccharomyces</taxon>
    </lineage>
</organism>
<name>VPS24_YEAST</name>
<feature type="chain" id="PRO_0000211487" description="Vacuolar protein-sorting-associated protein 24">
    <location>
        <begin position="1"/>
        <end position="224"/>
    </location>
</feature>
<feature type="cross-link" description="Glycyl lysine isopeptide (Lys-Gly) (interchain with G-Cter in ubiquitin)" evidence="7">
    <location>
        <position position="203"/>
    </location>
</feature>
<feature type="helix" evidence="8">
    <location>
        <begin position="3"/>
        <end position="9"/>
    </location>
</feature>
<feature type="helix" evidence="8">
    <location>
        <begin position="13"/>
        <end position="55"/>
    </location>
</feature>
<feature type="helix" evidence="8">
    <location>
        <begin position="58"/>
        <end position="97"/>
    </location>
</feature>
<feature type="helix" evidence="8">
    <location>
        <begin position="101"/>
        <end position="119"/>
    </location>
</feature>
<feature type="helix" evidence="8">
    <location>
        <begin position="122"/>
        <end position="124"/>
    </location>
</feature>
<feature type="helix" evidence="8">
    <location>
        <begin position="125"/>
        <end position="134"/>
    </location>
</feature>
<feature type="helix" evidence="8">
    <location>
        <begin position="140"/>
        <end position="144"/>
    </location>
</feature>
<feature type="turn" evidence="8">
    <location>
        <begin position="145"/>
        <end position="148"/>
    </location>
</feature>
<feature type="strand" evidence="8">
    <location>
        <begin position="160"/>
        <end position="162"/>
    </location>
</feature>
<feature type="helix" evidence="8">
    <location>
        <begin position="163"/>
        <end position="169"/>
    </location>
</feature>
<evidence type="ECO:0000269" key="1">
    <source>
    </source>
</evidence>
<evidence type="ECO:0000269" key="2">
    <source>
    </source>
</evidence>
<evidence type="ECO:0000269" key="3">
    <source>
    </source>
</evidence>
<evidence type="ECO:0000269" key="4">
    <source>
    </source>
</evidence>
<evidence type="ECO:0000269" key="5">
    <source>
    </source>
</evidence>
<evidence type="ECO:0000305" key="6"/>
<evidence type="ECO:0007744" key="7">
    <source>
    </source>
</evidence>
<evidence type="ECO:0007829" key="8">
    <source>
        <dbReference type="PDB" id="6ZH3"/>
    </source>
</evidence>
<protein>
    <recommendedName>
        <fullName>Vacuolar protein-sorting-associated protein 24</fullName>
    </recommendedName>
    <alternativeName>
        <fullName>DOA4-independent degradation protein 3</fullName>
    </alternativeName>
    <alternativeName>
        <fullName>ESCRT-III complex subunit VPS24</fullName>
    </alternativeName>
</protein>
<dbReference type="EMBL" id="X71621">
    <property type="protein sequence ID" value="CAA50631.1"/>
    <property type="molecule type" value="Genomic_DNA"/>
</dbReference>
<dbReference type="EMBL" id="Z28041">
    <property type="protein sequence ID" value="CAA81876.1"/>
    <property type="molecule type" value="Genomic_DNA"/>
</dbReference>
<dbReference type="EMBL" id="AY557901">
    <property type="protein sequence ID" value="AAS56227.1"/>
    <property type="molecule type" value="Genomic_DNA"/>
</dbReference>
<dbReference type="EMBL" id="BK006944">
    <property type="protein sequence ID" value="DAA09115.1"/>
    <property type="molecule type" value="Genomic_DNA"/>
</dbReference>
<dbReference type="PIR" id="S37862">
    <property type="entry name" value="S37862"/>
</dbReference>
<dbReference type="RefSeq" id="NP_012883.1">
    <property type="nucleotide sequence ID" value="NM_001179607.1"/>
</dbReference>
<dbReference type="PDB" id="6ZH3">
    <property type="method" value="EM"/>
    <property type="resolution" value="3.20 A"/>
    <property type="chains" value="A/B/C/D=1-224"/>
</dbReference>
<dbReference type="PDBsum" id="6ZH3"/>
<dbReference type="EMDB" id="EMD-11212"/>
<dbReference type="SMR" id="P36095"/>
<dbReference type="BioGRID" id="34091">
    <property type="interactions" value="724"/>
</dbReference>
<dbReference type="ComplexPortal" id="CPX-1624">
    <property type="entry name" value="ESCRT-III complex"/>
</dbReference>
<dbReference type="DIP" id="DIP-7295N"/>
<dbReference type="FunCoup" id="P36095">
    <property type="interactions" value="699"/>
</dbReference>
<dbReference type="IntAct" id="P36095">
    <property type="interactions" value="13"/>
</dbReference>
<dbReference type="MINT" id="P36095"/>
<dbReference type="STRING" id="4932.YKL041W"/>
<dbReference type="TCDB" id="3.A.31.1.1">
    <property type="family name" value="the endosomal sorting complexes required for transport iii (escrt-iii) family"/>
</dbReference>
<dbReference type="iPTMnet" id="P36095"/>
<dbReference type="PaxDb" id="4932-YKL041W"/>
<dbReference type="PeptideAtlas" id="P36095"/>
<dbReference type="EnsemblFungi" id="YKL041W_mRNA">
    <property type="protein sequence ID" value="YKL041W"/>
    <property type="gene ID" value="YKL041W"/>
</dbReference>
<dbReference type="GeneID" id="853825"/>
<dbReference type="KEGG" id="sce:YKL041W"/>
<dbReference type="AGR" id="SGD:S000001524"/>
<dbReference type="SGD" id="S000001524">
    <property type="gene designation" value="VPS24"/>
</dbReference>
<dbReference type="VEuPathDB" id="FungiDB:YKL041W"/>
<dbReference type="eggNOG" id="KOG3229">
    <property type="taxonomic scope" value="Eukaryota"/>
</dbReference>
<dbReference type="GeneTree" id="ENSGT00950000182832"/>
<dbReference type="HOGENOM" id="CLU_069208_0_2_1"/>
<dbReference type="InParanoid" id="P36095"/>
<dbReference type="OMA" id="KILWEVT"/>
<dbReference type="OrthoDB" id="2329734at2759"/>
<dbReference type="BioCyc" id="YEAST:G3O-31842-MONOMER"/>
<dbReference type="Reactome" id="R-SCE-1632852">
    <property type="pathway name" value="Macroautophagy"/>
</dbReference>
<dbReference type="Reactome" id="R-SCE-917729">
    <property type="pathway name" value="Endosomal Sorting Complex Required For Transport (ESCRT)"/>
</dbReference>
<dbReference type="Reactome" id="R-SCE-9668328">
    <property type="pathway name" value="Sealing of the nuclear envelope (NE) by ESCRT-III"/>
</dbReference>
<dbReference type="BioGRID-ORCS" id="853825">
    <property type="hits" value="2 hits in 10 CRISPR screens"/>
</dbReference>
<dbReference type="PRO" id="PR:P36095"/>
<dbReference type="Proteomes" id="UP000002311">
    <property type="component" value="Chromosome XI"/>
</dbReference>
<dbReference type="RNAct" id="P36095">
    <property type="molecule type" value="protein"/>
</dbReference>
<dbReference type="GO" id="GO:0005737">
    <property type="term" value="C:cytoplasm"/>
    <property type="evidence" value="ECO:0000314"/>
    <property type="project" value="SGD"/>
</dbReference>
<dbReference type="GO" id="GO:0005829">
    <property type="term" value="C:cytosol"/>
    <property type="evidence" value="ECO:0007005"/>
    <property type="project" value="SGD"/>
</dbReference>
<dbReference type="GO" id="GO:0000815">
    <property type="term" value="C:ESCRT III complex"/>
    <property type="evidence" value="ECO:0000314"/>
    <property type="project" value="SGD"/>
</dbReference>
<dbReference type="GO" id="GO:0005771">
    <property type="term" value="C:multivesicular body"/>
    <property type="evidence" value="ECO:0000318"/>
    <property type="project" value="GO_Central"/>
</dbReference>
<dbReference type="GO" id="GO:0042802">
    <property type="term" value="F:identical protein binding"/>
    <property type="evidence" value="ECO:0000353"/>
    <property type="project" value="IntAct"/>
</dbReference>
<dbReference type="GO" id="GO:1904669">
    <property type="term" value="P:ATP export"/>
    <property type="evidence" value="ECO:0000315"/>
    <property type="project" value="SGD"/>
</dbReference>
<dbReference type="GO" id="GO:0032509">
    <property type="term" value="P:endosome transport via multivesicular body sorting pathway"/>
    <property type="evidence" value="ECO:0000318"/>
    <property type="project" value="GO_Central"/>
</dbReference>
<dbReference type="GO" id="GO:0070676">
    <property type="term" value="P:intralumenal vesicle formation"/>
    <property type="evidence" value="ECO:0000315"/>
    <property type="project" value="SGD"/>
</dbReference>
<dbReference type="GO" id="GO:0045324">
    <property type="term" value="P:late endosome to vacuole transport"/>
    <property type="evidence" value="ECO:0000315"/>
    <property type="project" value="SGD"/>
</dbReference>
<dbReference type="GO" id="GO:0015031">
    <property type="term" value="P:protein transport"/>
    <property type="evidence" value="ECO:0000318"/>
    <property type="project" value="GO_Central"/>
</dbReference>
<dbReference type="GO" id="GO:0043162">
    <property type="term" value="P:ubiquitin-dependent protein catabolic process via the multivesicular body sorting pathway"/>
    <property type="evidence" value="ECO:0000314"/>
    <property type="project" value="ComplexPortal"/>
</dbReference>
<dbReference type="Gene3D" id="6.10.140.1230">
    <property type="match status" value="1"/>
</dbReference>
<dbReference type="InterPro" id="IPR005024">
    <property type="entry name" value="Snf7_fam"/>
</dbReference>
<dbReference type="PANTHER" id="PTHR10476">
    <property type="entry name" value="CHARGED MULTIVESICULAR BODY PROTEIN"/>
    <property type="match status" value="1"/>
</dbReference>
<dbReference type="Pfam" id="PF03357">
    <property type="entry name" value="Snf7"/>
    <property type="match status" value="1"/>
</dbReference>
<keyword id="KW-0002">3D-structure</keyword>
<keyword id="KW-0967">Endosome</keyword>
<keyword id="KW-1017">Isopeptide bond</keyword>
<keyword id="KW-0472">Membrane</keyword>
<keyword id="KW-0653">Protein transport</keyword>
<keyword id="KW-1185">Reference proteome</keyword>
<keyword id="KW-0813">Transport</keyword>
<keyword id="KW-0832">Ubl conjugation</keyword>
<reference key="1">
    <citation type="journal article" date="1993" name="Yeast">
        <title>The sequence of a 17.5 kb DNA fragment on the left arm of yeast chromosome XI identifies the protein kinase gene ELM1, the DNA primase gene PRI2, a new gene encoding a putative histone and seven new open reading frames.</title>
        <authorList>
            <person name="Purnelle B."/>
            <person name="Tettelin H."/>
            <person name="van Dyck L."/>
            <person name="Skala J."/>
            <person name="Goffeau A."/>
        </authorList>
    </citation>
    <scope>NUCLEOTIDE SEQUENCE [GENOMIC DNA]</scope>
    <source>
        <strain>ATCC 204508 / S288c</strain>
    </source>
</reference>
<reference key="2">
    <citation type="journal article" date="1994" name="Nature">
        <title>Complete DNA sequence of yeast chromosome XI.</title>
        <authorList>
            <person name="Dujon B."/>
            <person name="Alexandraki D."/>
            <person name="Andre B."/>
            <person name="Ansorge W."/>
            <person name="Baladron V."/>
            <person name="Ballesta J.P.G."/>
            <person name="Banrevi A."/>
            <person name="Bolle P.-A."/>
            <person name="Bolotin-Fukuhara M."/>
            <person name="Bossier P."/>
            <person name="Bou G."/>
            <person name="Boyer J."/>
            <person name="Buitrago M.J."/>
            <person name="Cheret G."/>
            <person name="Colleaux L."/>
            <person name="Daignan-Fornier B."/>
            <person name="del Rey F."/>
            <person name="Dion C."/>
            <person name="Domdey H."/>
            <person name="Duesterhoeft A."/>
            <person name="Duesterhus S."/>
            <person name="Entian K.-D."/>
            <person name="Erfle H."/>
            <person name="Esteban P.F."/>
            <person name="Feldmann H."/>
            <person name="Fernandes L."/>
            <person name="Fobo G.M."/>
            <person name="Fritz C."/>
            <person name="Fukuhara H."/>
            <person name="Gabel C."/>
            <person name="Gaillon L."/>
            <person name="Garcia-Cantalejo J.M."/>
            <person name="Garcia-Ramirez J.J."/>
            <person name="Gent M.E."/>
            <person name="Ghazvini M."/>
            <person name="Goffeau A."/>
            <person name="Gonzalez A."/>
            <person name="Grothues D."/>
            <person name="Guerreiro P."/>
            <person name="Hegemann J.H."/>
            <person name="Hewitt N."/>
            <person name="Hilger F."/>
            <person name="Hollenberg C.P."/>
            <person name="Horaitis O."/>
            <person name="Indge K.J."/>
            <person name="Jacquier A."/>
            <person name="James C.M."/>
            <person name="Jauniaux J.-C."/>
            <person name="Jimenez A."/>
            <person name="Keuchel H."/>
            <person name="Kirchrath L."/>
            <person name="Kleine K."/>
            <person name="Koetter P."/>
            <person name="Legrain P."/>
            <person name="Liebl S."/>
            <person name="Louis E.J."/>
            <person name="Maia e Silva A."/>
            <person name="Marck C."/>
            <person name="Monnier A.-L."/>
            <person name="Moestl D."/>
            <person name="Mueller S."/>
            <person name="Obermaier B."/>
            <person name="Oliver S.G."/>
            <person name="Pallier C."/>
            <person name="Pascolo S."/>
            <person name="Pfeiffer F."/>
            <person name="Philippsen P."/>
            <person name="Planta R.J."/>
            <person name="Pohl F.M."/>
            <person name="Pohl T.M."/>
            <person name="Poehlmann R."/>
            <person name="Portetelle D."/>
            <person name="Purnelle B."/>
            <person name="Puzos V."/>
            <person name="Ramezani Rad M."/>
            <person name="Rasmussen S.W."/>
            <person name="Remacha M.A."/>
            <person name="Revuelta J.L."/>
            <person name="Richard G.-F."/>
            <person name="Rieger M."/>
            <person name="Rodrigues-Pousada C."/>
            <person name="Rose M."/>
            <person name="Rupp T."/>
            <person name="Santos M.A."/>
            <person name="Schwager C."/>
            <person name="Sensen C."/>
            <person name="Skala J."/>
            <person name="Soares H."/>
            <person name="Sor F."/>
            <person name="Stegemann J."/>
            <person name="Tettelin H."/>
            <person name="Thierry A."/>
            <person name="Tzermia M."/>
            <person name="Urrestarazu L.A."/>
            <person name="van Dyck L."/>
            <person name="van Vliet-Reedijk J.C."/>
            <person name="Valens M."/>
            <person name="Vandenbol M."/>
            <person name="Vilela C."/>
            <person name="Vissers S."/>
            <person name="von Wettstein D."/>
            <person name="Voss H."/>
            <person name="Wiemann S."/>
            <person name="Xu G."/>
            <person name="Zimmermann J."/>
            <person name="Haasemann M."/>
            <person name="Becker I."/>
            <person name="Mewes H.-W."/>
        </authorList>
    </citation>
    <scope>NUCLEOTIDE SEQUENCE [LARGE SCALE GENOMIC DNA]</scope>
    <source>
        <strain>ATCC 204508 / S288c</strain>
    </source>
</reference>
<reference key="3">
    <citation type="journal article" date="2014" name="G3 (Bethesda)">
        <title>The reference genome sequence of Saccharomyces cerevisiae: Then and now.</title>
        <authorList>
            <person name="Engel S.R."/>
            <person name="Dietrich F.S."/>
            <person name="Fisk D.G."/>
            <person name="Binkley G."/>
            <person name="Balakrishnan R."/>
            <person name="Costanzo M.C."/>
            <person name="Dwight S.S."/>
            <person name="Hitz B.C."/>
            <person name="Karra K."/>
            <person name="Nash R.S."/>
            <person name="Weng S."/>
            <person name="Wong E.D."/>
            <person name="Lloyd P."/>
            <person name="Skrzypek M.S."/>
            <person name="Miyasato S.R."/>
            <person name="Simison M."/>
            <person name="Cherry J.M."/>
        </authorList>
    </citation>
    <scope>GENOME REANNOTATION</scope>
    <source>
        <strain>ATCC 204508 / S288c</strain>
    </source>
</reference>
<reference key="4">
    <citation type="journal article" date="2007" name="Genome Res.">
        <title>Approaching a complete repository of sequence-verified protein-encoding clones for Saccharomyces cerevisiae.</title>
        <authorList>
            <person name="Hu Y."/>
            <person name="Rolfs A."/>
            <person name="Bhullar B."/>
            <person name="Murthy T.V.S."/>
            <person name="Zhu C."/>
            <person name="Berger M.F."/>
            <person name="Camargo A.A."/>
            <person name="Kelley F."/>
            <person name="McCarron S."/>
            <person name="Jepson D."/>
            <person name="Richardson A."/>
            <person name="Raphael J."/>
            <person name="Moreira D."/>
            <person name="Taycher E."/>
            <person name="Zuo D."/>
            <person name="Mohr S."/>
            <person name="Kane M.F."/>
            <person name="Williamson J."/>
            <person name="Simpson A.J.G."/>
            <person name="Bulyk M.L."/>
            <person name="Harlow E."/>
            <person name="Marsischky G."/>
            <person name="Kolodner R.D."/>
            <person name="LaBaer J."/>
        </authorList>
    </citation>
    <scope>NUCLEOTIDE SEQUENCE [GENOMIC DNA]</scope>
    <source>
        <strain>ATCC 204508 / S288c</strain>
    </source>
</reference>
<reference key="5">
    <citation type="journal article" date="1998" name="EMBO J.">
        <title>The Vps4p AAA ATPase regulates membrane association of a Vps protein complex required for normal endosome function.</title>
        <authorList>
            <person name="Babst M."/>
            <person name="Wendland B."/>
            <person name="Estepa E.J."/>
            <person name="Emr S.D."/>
        </authorList>
    </citation>
    <scope>FUNCTION</scope>
    <scope>SUBCELLULAR LOCATION</scope>
</reference>
<reference key="6">
    <citation type="journal article" date="2001" name="J. Cell Sci.">
        <title>CHMP1 functions as a member of a newly defined family of vesicle trafficking proteins.</title>
        <authorList>
            <person name="Howard T.L."/>
            <person name="Stauffer D.R."/>
            <person name="Degnin C.R."/>
            <person name="Hollenberg S.M."/>
        </authorList>
    </citation>
    <scope>FUNCTION</scope>
</reference>
<reference key="7">
    <citation type="journal article" date="2002" name="Dev. Cell">
        <title>Escrt-III: an endosome-associated heterooligomeric protein complex required for mvb sorting.</title>
        <authorList>
            <person name="Babst M."/>
            <person name="Katzmann D.J."/>
            <person name="Estepa-Sabal E.J."/>
            <person name="Meerloo T."/>
            <person name="Emr S.D."/>
        </authorList>
    </citation>
    <scope>FUNCTION</scope>
    <scope>IDENTIFICATION IN THE ESCRT-III COMPLEX</scope>
    <scope>INTERACTION WITH VPS2; VPS20; SNF7 AND VPS4</scope>
    <scope>SUBCELLULAR LOCATION</scope>
</reference>
<reference key="8">
    <citation type="journal article" date="2003" name="Nature">
        <title>Global analysis of protein localization in budding yeast.</title>
        <authorList>
            <person name="Huh W.-K."/>
            <person name="Falvo J.V."/>
            <person name="Gerke L.C."/>
            <person name="Carroll A.S."/>
            <person name="Howson R.W."/>
            <person name="Weissman J.S."/>
            <person name="O'Shea E.K."/>
        </authorList>
    </citation>
    <scope>SUBCELLULAR LOCATION [LARGE SCALE ANALYSIS]</scope>
</reference>
<reference key="9">
    <citation type="journal article" date="2003" name="Nature">
        <title>Global analysis of protein expression in yeast.</title>
        <authorList>
            <person name="Ghaemmaghami S."/>
            <person name="Huh W.-K."/>
            <person name="Bower K."/>
            <person name="Howson R.W."/>
            <person name="Belle A."/>
            <person name="Dephoure N."/>
            <person name="O'Shea E.K."/>
            <person name="Weissman J.S."/>
        </authorList>
    </citation>
    <scope>LEVEL OF PROTEIN EXPRESSION [LARGE SCALE ANALYSIS]</scope>
</reference>
<reference key="10">
    <citation type="journal article" date="2006" name="J. Cell Biol.">
        <title>Did2 coordinates Vps4-mediated dissociation of ESCRT-III from endosomes.</title>
        <authorList>
            <person name="Nickerson D.P."/>
            <person name="West M."/>
            <person name="Odorizzi G."/>
        </authorList>
    </citation>
    <scope>INTERACTION WITH DID2</scope>
</reference>
<reference key="11">
    <citation type="journal article" date="2006" name="J. Cell Biol.">
        <authorList>
            <person name="Nickerson D.P."/>
            <person name="West M."/>
            <person name="Odorizzi G."/>
        </authorList>
    </citation>
    <scope>ERRATUM OF PUBMED:17130288</scope>
</reference>
<reference key="12">
    <citation type="journal article" date="2008" name="Dev. Cell">
        <title>Ordered assembly of the ESCRT-III complex on endosomes is required to sequester cargo during MVB formation.</title>
        <authorList>
            <person name="Teis D."/>
            <person name="Saksena S."/>
            <person name="Emr S.D."/>
        </authorList>
    </citation>
    <scope>ASSEMBLY OF THE ESCRT-III COMPLEX</scope>
</reference>
<reference key="13">
    <citation type="journal article" date="2012" name="Proteomics">
        <title>Sites of ubiquitin attachment in Saccharomyces cerevisiae.</title>
        <authorList>
            <person name="Starita L.M."/>
            <person name="Lo R.S."/>
            <person name="Eng J.K."/>
            <person name="von Haller P.D."/>
            <person name="Fields S."/>
        </authorList>
    </citation>
    <scope>UBIQUITINATION [LARGE SCALE ANALYSIS] AT LYS-203</scope>
    <scope>IDENTIFICATION BY MASS SPECTROMETRY [LARGE SCALE ANALYSIS]</scope>
</reference>
<comment type="function">
    <text evidence="1 2 5">Class E VPS protein implicated in concentration and sorting of cargo proteins of the multivesicular body (MVB) for incorporation into intralumenal vesicles. The lumenal sequestrated membrane proteins will be targeted into the vacuole after fusion of the endosome with the vacuole. Acts a component of the ESCRT-III complex, which appears to be critical for late steps in MVB sorting, such as membrane invagination and final cargo sorting and recruitment oflate-acting components of the sorting machinery. The MVB pathway requires the sequential function of ESCRT-O, -I,-II and -III complex assemblies. The DID4/VPS2-VPS24 subcomplex is required for the VPS4-dependent dissociation of ESCRT-III.</text>
</comment>
<comment type="subunit">
    <text evidence="2 4">Core component of the ESCRT-III complex (endosomal sorting required for transport complex III). ESCRT-III appears to be sequentially assembled as a flat lattice on the endosome membrane and forms a transient 450 kDa complex that contains DID4, oligomerized SNF7, VPS20 and VPS24. SNF7 oligomerization into a membrane-associated filament is nucleated by association of SNF7 with VPS20; the process is terminated through association of VPS24, possibly by capping the SNF7 filament. VPS24 subsequently associates with DID4/VPS2. Interacts with the VPS4. Interacts with DID2.</text>
</comment>
<comment type="interaction">
    <interactant intactId="EBI-26653">
        <id>P36095</id>
    </interactant>
    <interactant intactId="EBI-17554">
        <id>P39929</id>
        <label>SNF7</label>
    </interactant>
    <organismsDiffer>false</organismsDiffer>
    <experiments>3</experiments>
</comment>
<comment type="interaction">
    <interactant intactId="EBI-26653">
        <id>P36095</id>
    </interactant>
    <interactant intactId="EBI-26653">
        <id>P36095</id>
        <label>VPS24</label>
    </interactant>
    <organismsDiffer>false</organismsDiffer>
    <experiments>3</experiments>
</comment>
<comment type="subcellular location">
    <subcellularLocation>
        <location>Endosome membrane</location>
        <topology>Peripheral membrane protein</topology>
    </subcellularLocation>
    <subcellularLocation>
        <location>Endomembrane system</location>
        <topology>Peripheral membrane protein</topology>
    </subcellularLocation>
    <text>Endosomal and other punctate structures.</text>
</comment>
<comment type="miscellaneous">
    <text evidence="3">Present with 1890 molecules/cell in log phase SD medium.</text>
</comment>
<comment type="similarity">
    <text evidence="6">Belongs to the SNF7 family.</text>
</comment>
<sequence length="224" mass="26242">MDYIKKAIWGPDPKEQQRRIRSVLRKNGRNIEKSLRELTVLQNKTQQLIKKSAKKNDVRTVRLYAKELYQINKQYDRMYTSRAQLDSVRMKIDEAIRMNTLSNQMADSAGLMREVNSLVRLPQLRNTMIELEKELMKSGIISEMVDDTMESVGDVGEEMDEAVDEEVNKIVEQYTNEKFKNVDQVPTVELAANEEEQEIPDEKVDEEADRMVNEMRERLRALQN</sequence>
<proteinExistence type="evidence at protein level"/>
<accession>P36095</accession>
<accession>D6VXP5</accession>
<gene>
    <name type="primary">VPS24</name>
    <name type="synonym">DID3</name>
    <name type="ordered locus">YKL041W</name>
    <name type="ORF">YKL254</name>
</gene>